<proteinExistence type="inferred from homology"/>
<organism>
    <name type="scientific">Drosophila simulans</name>
    <name type="common">Fruit fly</name>
    <dbReference type="NCBI Taxonomy" id="7240"/>
    <lineage>
        <taxon>Eukaryota</taxon>
        <taxon>Metazoa</taxon>
        <taxon>Ecdysozoa</taxon>
        <taxon>Arthropoda</taxon>
        <taxon>Hexapoda</taxon>
        <taxon>Insecta</taxon>
        <taxon>Pterygota</taxon>
        <taxon>Neoptera</taxon>
        <taxon>Endopterygota</taxon>
        <taxon>Diptera</taxon>
        <taxon>Brachycera</taxon>
        <taxon>Muscomorpha</taxon>
        <taxon>Ephydroidea</taxon>
        <taxon>Drosophilidae</taxon>
        <taxon>Drosophila</taxon>
        <taxon>Sophophora</taxon>
    </lineage>
</organism>
<evidence type="ECO:0000250" key="1"/>
<evidence type="ECO:0000255" key="2">
    <source>
        <dbReference type="PROSITE-ProRule" id="PRU00092"/>
    </source>
</evidence>
<evidence type="ECO:0000255" key="3">
    <source>
        <dbReference type="PROSITE-ProRule" id="PRU00723"/>
    </source>
</evidence>
<evidence type="ECO:0000256" key="4">
    <source>
        <dbReference type="SAM" id="MobiDB-lite"/>
    </source>
</evidence>
<keyword id="KW-0238">DNA-binding</keyword>
<keyword id="KW-0479">Metal-binding</keyword>
<keyword id="KW-0539">Nucleus</keyword>
<keyword id="KW-1185">Reference proteome</keyword>
<keyword id="KW-0678">Repressor</keyword>
<keyword id="KW-0804">Transcription</keyword>
<keyword id="KW-0805">Transcription regulation</keyword>
<keyword id="KW-0862">Zinc</keyword>
<keyword id="KW-0863">Zinc-finger</keyword>
<sequence length="513" mass="58604">MEEYEAQLLVVEQALENAADDAQRQELLALKNNLQELLALTRDTGDEAPTDELPQQGNDLDDELQRLKSELSALEAAGSSQTALDEERQLADLRTKYTAMVGEKCSAPHEHSWGTCYHNALICGVDDEVVINSEGVLDARLRVLFTNPTHREMLPCSYYLEGECRFDEAKCRFSHGALVTGSSIRKYNPPDFHKLSRSRPVFALLPDRLWHRGRVLCVNFVEQVCRVRLDGQDHKERERDFKFEELYPLTTDQDEDDELSSEESTSSMRDASSDEAESDMDDLEEARRARMVELSLFTYKPTDRLGAWEEFTRGIGSKLMEKMGYIHGTGLGSDGRGIVTPVSAQILPQGRSLDACMELREAANGDKDYFSVERKLKRAQRRQRKADEKAYVRESQRVDVFTFLNDRVLGPGESTQQSEQVAKKAKTNELQQHSTKTLNVETVRIADEIRRKQRDMAKVKQSLERNSGDAQLQKRLQVQMQSHKQELATLQAQERSLSKEQQTRKSKNKMFEF</sequence>
<accession>B4Q8A7</accession>
<protein>
    <recommendedName>
        <fullName>Zinc finger CCCH-type with G patch domain-containing protein</fullName>
    </recommendedName>
</protein>
<reference key="1">
    <citation type="journal article" date="2007" name="Nature">
        <title>Evolution of genes and genomes on the Drosophila phylogeny.</title>
        <authorList>
            <consortium name="Drosophila 12 genomes consortium"/>
        </authorList>
    </citation>
    <scope>NUCLEOTIDE SEQUENCE [LARGE SCALE GENOMIC DNA]</scope>
</reference>
<comment type="function">
    <text evidence="1">Transcription repressor.</text>
</comment>
<comment type="subcellular location">
    <subcellularLocation>
        <location evidence="1">Nucleus</location>
    </subcellularLocation>
</comment>
<gene>
    <name type="ORF">GD23643</name>
</gene>
<feature type="chain" id="PRO_0000385208" description="Zinc finger CCCH-type with G patch domain-containing protein">
    <location>
        <begin position="1"/>
        <end position="513"/>
    </location>
</feature>
<feature type="domain" description="G-patch" evidence="2">
    <location>
        <begin position="312"/>
        <end position="358"/>
    </location>
</feature>
<feature type="zinc finger region" description="C3H1-type" evidence="3">
    <location>
        <begin position="155"/>
        <end position="178"/>
    </location>
</feature>
<feature type="region of interest" description="Disordered" evidence="4">
    <location>
        <begin position="252"/>
        <end position="283"/>
    </location>
</feature>
<feature type="region of interest" description="Disordered" evidence="4">
    <location>
        <begin position="477"/>
        <end position="513"/>
    </location>
</feature>
<feature type="compositionally biased region" description="Acidic residues" evidence="4">
    <location>
        <begin position="252"/>
        <end position="261"/>
    </location>
</feature>
<feature type="compositionally biased region" description="Acidic residues" evidence="4">
    <location>
        <begin position="273"/>
        <end position="283"/>
    </location>
</feature>
<feature type="compositionally biased region" description="Polar residues" evidence="4">
    <location>
        <begin position="477"/>
        <end position="495"/>
    </location>
</feature>
<feature type="compositionally biased region" description="Basic and acidic residues" evidence="4">
    <location>
        <begin position="496"/>
        <end position="513"/>
    </location>
</feature>
<name>ZGPAT_DROSI</name>
<dbReference type="EMBL" id="CM000361">
    <property type="protein sequence ID" value="EDX04429.1"/>
    <property type="molecule type" value="Genomic_DNA"/>
</dbReference>
<dbReference type="SMR" id="B4Q8A7"/>
<dbReference type="STRING" id="7240.B4Q8A7"/>
<dbReference type="EnsemblMetazoa" id="FBtr0223553">
    <property type="protein sequence ID" value="FBpp0222045"/>
    <property type="gene ID" value="FBgn0195020"/>
</dbReference>
<dbReference type="EnsemblMetazoa" id="XM_002078808.4">
    <property type="protein sequence ID" value="XP_002078844.1"/>
    <property type="gene ID" value="LOC6731709"/>
</dbReference>
<dbReference type="GeneID" id="6731709"/>
<dbReference type="HOGENOM" id="CLU_040504_1_0_1"/>
<dbReference type="OMA" id="QYTRGIG"/>
<dbReference type="OrthoDB" id="5842926at2759"/>
<dbReference type="PhylomeDB" id="B4Q8A7"/>
<dbReference type="Proteomes" id="UP000000304">
    <property type="component" value="Chromosome 2L"/>
</dbReference>
<dbReference type="Bgee" id="FBgn0195020">
    <property type="expression patterns" value="Expressed in embryo and 3 other cell types or tissues"/>
</dbReference>
<dbReference type="GO" id="GO:0005634">
    <property type="term" value="C:nucleus"/>
    <property type="evidence" value="ECO:0007669"/>
    <property type="project" value="UniProtKB-SubCell"/>
</dbReference>
<dbReference type="GO" id="GO:0001227">
    <property type="term" value="F:DNA-binding transcription repressor activity, RNA polymerase II-specific"/>
    <property type="evidence" value="ECO:0007669"/>
    <property type="project" value="TreeGrafter"/>
</dbReference>
<dbReference type="GO" id="GO:0000978">
    <property type="term" value="F:RNA polymerase II cis-regulatory region sequence-specific DNA binding"/>
    <property type="evidence" value="ECO:0007669"/>
    <property type="project" value="TreeGrafter"/>
</dbReference>
<dbReference type="GO" id="GO:0008270">
    <property type="term" value="F:zinc ion binding"/>
    <property type="evidence" value="ECO:0007669"/>
    <property type="project" value="UniProtKB-KW"/>
</dbReference>
<dbReference type="Gene3D" id="2.30.30.1190">
    <property type="match status" value="1"/>
</dbReference>
<dbReference type="InterPro" id="IPR000467">
    <property type="entry name" value="G_patch_dom"/>
</dbReference>
<dbReference type="InterPro" id="IPR000571">
    <property type="entry name" value="Znf_CCCH"/>
</dbReference>
<dbReference type="PANTHER" id="PTHR46297">
    <property type="entry name" value="ZINC FINGER CCCH-TYPE WITH G PATCH DOMAIN-CONTAINING PROTEIN"/>
    <property type="match status" value="1"/>
</dbReference>
<dbReference type="PANTHER" id="PTHR46297:SF1">
    <property type="entry name" value="ZINC FINGER CCCH-TYPE WITH G PATCH DOMAIN-CONTAINING PROTEIN"/>
    <property type="match status" value="1"/>
</dbReference>
<dbReference type="Pfam" id="PF01585">
    <property type="entry name" value="G-patch"/>
    <property type="match status" value="1"/>
</dbReference>
<dbReference type="SMART" id="SM00443">
    <property type="entry name" value="G_patch"/>
    <property type="match status" value="1"/>
</dbReference>
<dbReference type="PROSITE" id="PS50174">
    <property type="entry name" value="G_PATCH"/>
    <property type="match status" value="1"/>
</dbReference>
<dbReference type="PROSITE" id="PS50103">
    <property type="entry name" value="ZF_C3H1"/>
    <property type="match status" value="1"/>
</dbReference>